<gene>
    <name evidence="1" type="primary">recU</name>
    <name type="ordered locus">OEOE_1094</name>
</gene>
<protein>
    <recommendedName>
        <fullName evidence="1">Holliday junction resolvase RecU</fullName>
        <ecNumber evidence="1">3.1.21.10</ecNumber>
    </recommendedName>
    <alternativeName>
        <fullName evidence="1">Recombination protein U homolog</fullName>
    </alternativeName>
</protein>
<evidence type="ECO:0000255" key="1">
    <source>
        <dbReference type="HAMAP-Rule" id="MF_00130"/>
    </source>
</evidence>
<evidence type="ECO:0000256" key="2">
    <source>
        <dbReference type="SAM" id="MobiDB-lite"/>
    </source>
</evidence>
<name>RECU_OENOB</name>
<feature type="chain" id="PRO_1000016737" description="Holliday junction resolvase RecU">
    <location>
        <begin position="1"/>
        <end position="197"/>
    </location>
</feature>
<feature type="region of interest" description="Disordered" evidence="2">
    <location>
        <begin position="1"/>
        <end position="21"/>
    </location>
</feature>
<feature type="binding site" evidence="1">
    <location>
        <position position="82"/>
    </location>
    <ligand>
        <name>Mg(2+)</name>
        <dbReference type="ChEBI" id="CHEBI:18420"/>
    </ligand>
</feature>
<feature type="binding site" evidence="1">
    <location>
        <position position="84"/>
    </location>
    <ligand>
        <name>Mg(2+)</name>
        <dbReference type="ChEBI" id="CHEBI:18420"/>
    </ligand>
</feature>
<feature type="binding site" evidence="1">
    <location>
        <position position="97"/>
    </location>
    <ligand>
        <name>Mg(2+)</name>
        <dbReference type="ChEBI" id="CHEBI:18420"/>
    </ligand>
</feature>
<feature type="binding site" evidence="1">
    <location>
        <position position="116"/>
    </location>
    <ligand>
        <name>Mg(2+)</name>
        <dbReference type="ChEBI" id="CHEBI:18420"/>
    </ligand>
</feature>
<feature type="site" description="Transition state stabilizer" evidence="1">
    <location>
        <position position="99"/>
    </location>
</feature>
<comment type="function">
    <text evidence="1">Endonuclease that resolves Holliday junction intermediates in genetic recombination. Cleaves mobile four-strand junctions by introducing symmetrical nicks in paired strands. Promotes annealing of linear ssDNA with homologous dsDNA. Required for DNA repair, homologous recombination and chromosome segregation.</text>
</comment>
<comment type="catalytic activity">
    <reaction evidence="1">
        <text>Endonucleolytic cleavage at a junction such as a reciprocal single-stranded crossover between two homologous DNA duplexes (Holliday junction).</text>
        <dbReference type="EC" id="3.1.21.10"/>
    </reaction>
</comment>
<comment type="cofactor">
    <cofactor evidence="1">
        <name>Mg(2+)</name>
        <dbReference type="ChEBI" id="CHEBI:18420"/>
    </cofactor>
    <text evidence="1">Binds 1 Mg(2+) ion per subunit.</text>
</comment>
<comment type="subcellular location">
    <subcellularLocation>
        <location evidence="1">Cytoplasm</location>
    </subcellularLocation>
</comment>
<comment type="similarity">
    <text evidence="1">Belongs to the RecU family.</text>
</comment>
<sequence>MVNYPSGVRAGGYPQKKKNQNIRYGKRGMGLEEMINQANDYYLVNHQAVIHKKPTPITVVHVDYPDRSMAKITEAYYVQPSTTDYNGVVSGKYIDFDAKETKNKTNMPLKNFHQHQITHLKNVLENGGIGFLVLGFTTLSEYYIFPASLLIKIWDKAKAGGEKSLPYKIVSKQGIKINSKMIPSLDYLPALKKLFNI</sequence>
<proteinExistence type="inferred from homology"/>
<dbReference type="EC" id="3.1.21.10" evidence="1"/>
<dbReference type="EMBL" id="CP000411">
    <property type="protein sequence ID" value="ABJ56993.1"/>
    <property type="molecule type" value="Genomic_DNA"/>
</dbReference>
<dbReference type="RefSeq" id="WP_002818912.1">
    <property type="nucleotide sequence ID" value="NC_008528.1"/>
</dbReference>
<dbReference type="SMR" id="Q04EX9"/>
<dbReference type="STRING" id="203123.OEOE_1094"/>
<dbReference type="GeneID" id="75065826"/>
<dbReference type="KEGG" id="ooe:OEOE_1094"/>
<dbReference type="eggNOG" id="COG3331">
    <property type="taxonomic scope" value="Bacteria"/>
</dbReference>
<dbReference type="HOGENOM" id="CLU_096340_0_0_9"/>
<dbReference type="Proteomes" id="UP000000774">
    <property type="component" value="Chromosome"/>
</dbReference>
<dbReference type="GO" id="GO:0005737">
    <property type="term" value="C:cytoplasm"/>
    <property type="evidence" value="ECO:0007669"/>
    <property type="project" value="UniProtKB-SubCell"/>
</dbReference>
<dbReference type="GO" id="GO:0004519">
    <property type="term" value="F:endonuclease activity"/>
    <property type="evidence" value="ECO:0007669"/>
    <property type="project" value="UniProtKB-UniRule"/>
</dbReference>
<dbReference type="GO" id="GO:0000287">
    <property type="term" value="F:magnesium ion binding"/>
    <property type="evidence" value="ECO:0007669"/>
    <property type="project" value="UniProtKB-UniRule"/>
</dbReference>
<dbReference type="GO" id="GO:0003676">
    <property type="term" value="F:nucleic acid binding"/>
    <property type="evidence" value="ECO:0007669"/>
    <property type="project" value="InterPro"/>
</dbReference>
<dbReference type="GO" id="GO:0007059">
    <property type="term" value="P:chromosome segregation"/>
    <property type="evidence" value="ECO:0007669"/>
    <property type="project" value="UniProtKB-UniRule"/>
</dbReference>
<dbReference type="GO" id="GO:0006310">
    <property type="term" value="P:DNA recombination"/>
    <property type="evidence" value="ECO:0007669"/>
    <property type="project" value="UniProtKB-UniRule"/>
</dbReference>
<dbReference type="GO" id="GO:0006281">
    <property type="term" value="P:DNA repair"/>
    <property type="evidence" value="ECO:0007669"/>
    <property type="project" value="UniProtKB-UniRule"/>
</dbReference>
<dbReference type="CDD" id="cd22354">
    <property type="entry name" value="RecU-like"/>
    <property type="match status" value="1"/>
</dbReference>
<dbReference type="Gene3D" id="3.40.1350.10">
    <property type="match status" value="1"/>
</dbReference>
<dbReference type="HAMAP" id="MF_00130">
    <property type="entry name" value="RecU"/>
    <property type="match status" value="1"/>
</dbReference>
<dbReference type="InterPro" id="IPR004612">
    <property type="entry name" value="Resolv_RecU"/>
</dbReference>
<dbReference type="InterPro" id="IPR011335">
    <property type="entry name" value="Restrct_endonuc-II-like"/>
</dbReference>
<dbReference type="InterPro" id="IPR011856">
    <property type="entry name" value="tRNA_endonuc-like_dom_sf"/>
</dbReference>
<dbReference type="NCBIfam" id="NF002584">
    <property type="entry name" value="PRK02234.1-5"/>
    <property type="match status" value="1"/>
</dbReference>
<dbReference type="NCBIfam" id="TIGR00648">
    <property type="entry name" value="recU"/>
    <property type="match status" value="1"/>
</dbReference>
<dbReference type="Pfam" id="PF03838">
    <property type="entry name" value="RecU"/>
    <property type="match status" value="1"/>
</dbReference>
<dbReference type="PIRSF" id="PIRSF037785">
    <property type="entry name" value="RecU"/>
    <property type="match status" value="1"/>
</dbReference>
<dbReference type="SUPFAM" id="SSF52980">
    <property type="entry name" value="Restriction endonuclease-like"/>
    <property type="match status" value="1"/>
</dbReference>
<keyword id="KW-0963">Cytoplasm</keyword>
<keyword id="KW-0227">DNA damage</keyword>
<keyword id="KW-0233">DNA recombination</keyword>
<keyword id="KW-0234">DNA repair</keyword>
<keyword id="KW-0255">Endonuclease</keyword>
<keyword id="KW-0378">Hydrolase</keyword>
<keyword id="KW-0460">Magnesium</keyword>
<keyword id="KW-0479">Metal-binding</keyword>
<keyword id="KW-0540">Nuclease</keyword>
<keyword id="KW-1185">Reference proteome</keyword>
<reference key="1">
    <citation type="journal article" date="2006" name="Proc. Natl. Acad. Sci. U.S.A.">
        <title>Comparative genomics of the lactic acid bacteria.</title>
        <authorList>
            <person name="Makarova K.S."/>
            <person name="Slesarev A."/>
            <person name="Wolf Y.I."/>
            <person name="Sorokin A."/>
            <person name="Mirkin B."/>
            <person name="Koonin E.V."/>
            <person name="Pavlov A."/>
            <person name="Pavlova N."/>
            <person name="Karamychev V."/>
            <person name="Polouchine N."/>
            <person name="Shakhova V."/>
            <person name="Grigoriev I."/>
            <person name="Lou Y."/>
            <person name="Rohksar D."/>
            <person name="Lucas S."/>
            <person name="Huang K."/>
            <person name="Goodstein D.M."/>
            <person name="Hawkins T."/>
            <person name="Plengvidhya V."/>
            <person name="Welker D."/>
            <person name="Hughes J."/>
            <person name="Goh Y."/>
            <person name="Benson A."/>
            <person name="Baldwin K."/>
            <person name="Lee J.-H."/>
            <person name="Diaz-Muniz I."/>
            <person name="Dosti B."/>
            <person name="Smeianov V."/>
            <person name="Wechter W."/>
            <person name="Barabote R."/>
            <person name="Lorca G."/>
            <person name="Altermann E."/>
            <person name="Barrangou R."/>
            <person name="Ganesan B."/>
            <person name="Xie Y."/>
            <person name="Rawsthorne H."/>
            <person name="Tamir D."/>
            <person name="Parker C."/>
            <person name="Breidt F."/>
            <person name="Broadbent J.R."/>
            <person name="Hutkins R."/>
            <person name="O'Sullivan D."/>
            <person name="Steele J."/>
            <person name="Unlu G."/>
            <person name="Saier M.H. Jr."/>
            <person name="Klaenhammer T."/>
            <person name="Richardson P."/>
            <person name="Kozyavkin S."/>
            <person name="Weimer B.C."/>
            <person name="Mills D.A."/>
        </authorList>
    </citation>
    <scope>NUCLEOTIDE SEQUENCE [LARGE SCALE GENOMIC DNA]</scope>
    <source>
        <strain>ATCC BAA-331 / PSU-1</strain>
    </source>
</reference>
<organism>
    <name type="scientific">Oenococcus oeni (strain ATCC BAA-331 / PSU-1)</name>
    <dbReference type="NCBI Taxonomy" id="203123"/>
    <lineage>
        <taxon>Bacteria</taxon>
        <taxon>Bacillati</taxon>
        <taxon>Bacillota</taxon>
        <taxon>Bacilli</taxon>
        <taxon>Lactobacillales</taxon>
        <taxon>Lactobacillaceae</taxon>
        <taxon>Oenococcus</taxon>
    </lineage>
</organism>
<accession>Q04EX9</accession>